<dbReference type="EMBL" id="CP000240">
    <property type="protein sequence ID" value="ABD01227.1"/>
    <property type="molecule type" value="Genomic_DNA"/>
</dbReference>
<dbReference type="RefSeq" id="WP_011431896.1">
    <property type="nucleotide sequence ID" value="NC_007776.1"/>
</dbReference>
<dbReference type="SMR" id="Q2JPQ5"/>
<dbReference type="STRING" id="321332.CYB_0229"/>
<dbReference type="KEGG" id="cyb:CYB_0229"/>
<dbReference type="eggNOG" id="COG1489">
    <property type="taxonomic scope" value="Bacteria"/>
</dbReference>
<dbReference type="HOGENOM" id="CLU_052299_2_0_3"/>
<dbReference type="OrthoDB" id="9802365at2"/>
<dbReference type="Proteomes" id="UP000001938">
    <property type="component" value="Chromosome"/>
</dbReference>
<dbReference type="GO" id="GO:0003677">
    <property type="term" value="F:DNA binding"/>
    <property type="evidence" value="ECO:0007669"/>
    <property type="project" value="InterPro"/>
</dbReference>
<dbReference type="CDD" id="cd22359">
    <property type="entry name" value="SfsA-like_bacterial"/>
    <property type="match status" value="1"/>
</dbReference>
<dbReference type="Gene3D" id="2.40.50.580">
    <property type="match status" value="1"/>
</dbReference>
<dbReference type="Gene3D" id="3.40.1350.60">
    <property type="match status" value="1"/>
</dbReference>
<dbReference type="HAMAP" id="MF_00095">
    <property type="entry name" value="SfsA"/>
    <property type="match status" value="1"/>
</dbReference>
<dbReference type="InterPro" id="IPR005224">
    <property type="entry name" value="SfsA"/>
</dbReference>
<dbReference type="InterPro" id="IPR040452">
    <property type="entry name" value="SfsA_C"/>
</dbReference>
<dbReference type="InterPro" id="IPR041465">
    <property type="entry name" value="SfsA_N"/>
</dbReference>
<dbReference type="NCBIfam" id="TIGR00230">
    <property type="entry name" value="sfsA"/>
    <property type="match status" value="1"/>
</dbReference>
<dbReference type="PANTHER" id="PTHR30545">
    <property type="entry name" value="SUGAR FERMENTATION STIMULATION PROTEIN A"/>
    <property type="match status" value="1"/>
</dbReference>
<dbReference type="PANTHER" id="PTHR30545:SF2">
    <property type="entry name" value="SUGAR FERMENTATION STIMULATION PROTEIN A"/>
    <property type="match status" value="1"/>
</dbReference>
<dbReference type="Pfam" id="PF03749">
    <property type="entry name" value="SfsA"/>
    <property type="match status" value="1"/>
</dbReference>
<dbReference type="Pfam" id="PF17746">
    <property type="entry name" value="SfsA_N"/>
    <property type="match status" value="1"/>
</dbReference>
<reference key="1">
    <citation type="journal article" date="2007" name="ISME J.">
        <title>Population level functional diversity in a microbial community revealed by comparative genomic and metagenomic analyses.</title>
        <authorList>
            <person name="Bhaya D."/>
            <person name="Grossman A.R."/>
            <person name="Steunou A.-S."/>
            <person name="Khuri N."/>
            <person name="Cohan F.M."/>
            <person name="Hamamura N."/>
            <person name="Melendrez M.C."/>
            <person name="Bateson M.M."/>
            <person name="Ward D.M."/>
            <person name="Heidelberg J.F."/>
        </authorList>
    </citation>
    <scope>NUCLEOTIDE SEQUENCE [LARGE SCALE GENOMIC DNA]</scope>
    <source>
        <strain>JA-2-3B'a(2-13)</strain>
    </source>
</reference>
<accession>Q2JPQ5</accession>
<organism>
    <name type="scientific">Synechococcus sp. (strain JA-2-3B'a(2-13))</name>
    <name type="common">Cyanobacteria bacterium Yellowstone B-Prime</name>
    <dbReference type="NCBI Taxonomy" id="321332"/>
    <lineage>
        <taxon>Bacteria</taxon>
        <taxon>Bacillati</taxon>
        <taxon>Cyanobacteriota</taxon>
        <taxon>Cyanophyceae</taxon>
        <taxon>Synechococcales</taxon>
        <taxon>Synechococcaceae</taxon>
        <taxon>Synechococcus</taxon>
    </lineage>
</organism>
<comment type="similarity">
    <text evidence="1">Belongs to the SfsA family.</text>
</comment>
<proteinExistence type="inferred from homology"/>
<keyword id="KW-1185">Reference proteome</keyword>
<protein>
    <recommendedName>
        <fullName evidence="1">Sugar fermentation stimulation protein homolog</fullName>
    </recommendedName>
</protein>
<gene>
    <name evidence="1" type="primary">sfsA</name>
    <name type="ordered locus">CYB_0229</name>
</gene>
<name>SFSA_SYNJB</name>
<feature type="chain" id="PRO_0000340155" description="Sugar fermentation stimulation protein homolog">
    <location>
        <begin position="1"/>
        <end position="239"/>
    </location>
</feature>
<sequence length="239" mass="26964">MECGDGPVPYRFSSPLHRGVLRSRYKRFLADVELENGQQIIAHCPNTGPMSGVCQVGAPVYLSHHPEPKRKLAYTWEMIQVDGVWVGINTSLPNRLVDWGLERGWFPQLAGFSRRQREVTCGKSKIDFLLTGDAGSAYLEVKNTTWAVGSRALFPDTVTTRGQKHLEDLIQIRQQGQRALLLYWINRADCTEFAPGEERDPRYARLFREALQAGVEMLPYRVEVSPTGIRPLGLAKIVV</sequence>
<evidence type="ECO:0000255" key="1">
    <source>
        <dbReference type="HAMAP-Rule" id="MF_00095"/>
    </source>
</evidence>